<reference key="1">
    <citation type="journal article" date="2004" name="Proc. Natl. Acad. Sci. U.S.A.">
        <title>Structural flexibility in the Burkholderia mallei genome.</title>
        <authorList>
            <person name="Nierman W.C."/>
            <person name="DeShazer D."/>
            <person name="Kim H.S."/>
            <person name="Tettelin H."/>
            <person name="Nelson K.E."/>
            <person name="Feldblyum T.V."/>
            <person name="Ulrich R.L."/>
            <person name="Ronning C.M."/>
            <person name="Brinkac L.M."/>
            <person name="Daugherty S.C."/>
            <person name="Davidsen T.D."/>
            <person name="DeBoy R.T."/>
            <person name="Dimitrov G."/>
            <person name="Dodson R.J."/>
            <person name="Durkin A.S."/>
            <person name="Gwinn M.L."/>
            <person name="Haft D.H."/>
            <person name="Khouri H.M."/>
            <person name="Kolonay J.F."/>
            <person name="Madupu R."/>
            <person name="Mohammoud Y."/>
            <person name="Nelson W.C."/>
            <person name="Radune D."/>
            <person name="Romero C.M."/>
            <person name="Sarria S."/>
            <person name="Selengut J."/>
            <person name="Shamblin C."/>
            <person name="Sullivan S.A."/>
            <person name="White O."/>
            <person name="Yu Y."/>
            <person name="Zafar N."/>
            <person name="Zhou L."/>
            <person name="Fraser C.M."/>
        </authorList>
    </citation>
    <scope>NUCLEOTIDE SEQUENCE [LARGE SCALE GENOMIC DNA]</scope>
    <source>
        <strain>ATCC 23344</strain>
    </source>
</reference>
<sequence>MTDLTATPAPAEPAASAYDPTAKQKAQAKTARIPIKIVPIEKLKKPEWIRVKAATSSSRFNEIKTILREHNLHTVCEEASCPNIGECFGKGTATFMIMGDKCTRRCPFCDVGHGRPDPLDADEPKNLARTIAALKLKYVVITSVDRDDLRDGGAGHFVECIREVREQSPATRIEILTPDFRGRLDRALAILNAAPPDVMNHNLETVPRLYKEARPGSDYAHSLKLLKDFKALHPDVATKSGLMVGLGETTDEILQVMRDLRAHDVDMLTIGQYLQPSEHHLPVREYVHPDTFKMYEEEAYKMGFTHAAVGAMVRSSYHADLQAHGAGVV</sequence>
<feature type="chain" id="PRO_1000012199" description="Lipoyl synthase">
    <location>
        <begin position="1"/>
        <end position="329"/>
    </location>
</feature>
<feature type="domain" description="Radical SAM core" evidence="2">
    <location>
        <begin position="87"/>
        <end position="305"/>
    </location>
</feature>
<feature type="region of interest" description="Disordered" evidence="3">
    <location>
        <begin position="1"/>
        <end position="23"/>
    </location>
</feature>
<feature type="binding site" evidence="1">
    <location>
        <position position="76"/>
    </location>
    <ligand>
        <name>[4Fe-4S] cluster</name>
        <dbReference type="ChEBI" id="CHEBI:49883"/>
        <label>1</label>
    </ligand>
</feature>
<feature type="binding site" evidence="1">
    <location>
        <position position="81"/>
    </location>
    <ligand>
        <name>[4Fe-4S] cluster</name>
        <dbReference type="ChEBI" id="CHEBI:49883"/>
        <label>1</label>
    </ligand>
</feature>
<feature type="binding site" evidence="1">
    <location>
        <position position="87"/>
    </location>
    <ligand>
        <name>[4Fe-4S] cluster</name>
        <dbReference type="ChEBI" id="CHEBI:49883"/>
        <label>1</label>
    </ligand>
</feature>
<feature type="binding site" evidence="1">
    <location>
        <position position="102"/>
    </location>
    <ligand>
        <name>[4Fe-4S] cluster</name>
        <dbReference type="ChEBI" id="CHEBI:49883"/>
        <label>2</label>
        <note>4Fe-4S-S-AdoMet</note>
    </ligand>
</feature>
<feature type="binding site" evidence="1">
    <location>
        <position position="106"/>
    </location>
    <ligand>
        <name>[4Fe-4S] cluster</name>
        <dbReference type="ChEBI" id="CHEBI:49883"/>
        <label>2</label>
        <note>4Fe-4S-S-AdoMet</note>
    </ligand>
</feature>
<feature type="binding site" evidence="1">
    <location>
        <position position="109"/>
    </location>
    <ligand>
        <name>[4Fe-4S] cluster</name>
        <dbReference type="ChEBI" id="CHEBI:49883"/>
        <label>2</label>
        <note>4Fe-4S-S-AdoMet</note>
    </ligand>
</feature>
<feature type="binding site" evidence="1">
    <location>
        <position position="316"/>
    </location>
    <ligand>
        <name>[4Fe-4S] cluster</name>
        <dbReference type="ChEBI" id="CHEBI:49883"/>
        <label>1</label>
    </ligand>
</feature>
<proteinExistence type="inferred from homology"/>
<protein>
    <recommendedName>
        <fullName evidence="1">Lipoyl synthase</fullName>
        <ecNumber evidence="1">2.8.1.8</ecNumber>
    </recommendedName>
    <alternativeName>
        <fullName evidence="1">Lip-syn</fullName>
        <shortName evidence="1">LS</shortName>
    </alternativeName>
    <alternativeName>
        <fullName evidence="1">Lipoate synthase</fullName>
    </alternativeName>
    <alternativeName>
        <fullName evidence="1">Lipoic acid synthase</fullName>
    </alternativeName>
    <alternativeName>
        <fullName evidence="1">Sulfur insertion protein LipA</fullName>
    </alternativeName>
</protein>
<organism>
    <name type="scientific">Burkholderia mallei (strain ATCC 23344)</name>
    <dbReference type="NCBI Taxonomy" id="243160"/>
    <lineage>
        <taxon>Bacteria</taxon>
        <taxon>Pseudomonadati</taxon>
        <taxon>Pseudomonadota</taxon>
        <taxon>Betaproteobacteria</taxon>
        <taxon>Burkholderiales</taxon>
        <taxon>Burkholderiaceae</taxon>
        <taxon>Burkholderia</taxon>
        <taxon>pseudomallei group</taxon>
    </lineage>
</organism>
<evidence type="ECO:0000255" key="1">
    <source>
        <dbReference type="HAMAP-Rule" id="MF_00206"/>
    </source>
</evidence>
<evidence type="ECO:0000255" key="2">
    <source>
        <dbReference type="PROSITE-ProRule" id="PRU01266"/>
    </source>
</evidence>
<evidence type="ECO:0000256" key="3">
    <source>
        <dbReference type="SAM" id="MobiDB-lite"/>
    </source>
</evidence>
<name>LIPA_BURMA</name>
<keyword id="KW-0004">4Fe-4S</keyword>
<keyword id="KW-0963">Cytoplasm</keyword>
<keyword id="KW-0408">Iron</keyword>
<keyword id="KW-0411">Iron-sulfur</keyword>
<keyword id="KW-0479">Metal-binding</keyword>
<keyword id="KW-1185">Reference proteome</keyword>
<keyword id="KW-0949">S-adenosyl-L-methionine</keyword>
<keyword id="KW-0808">Transferase</keyword>
<accession>Q62N16</accession>
<dbReference type="EC" id="2.8.1.8" evidence="1"/>
<dbReference type="EMBL" id="CP000010">
    <property type="protein sequence ID" value="AAU48954.1"/>
    <property type="molecule type" value="Genomic_DNA"/>
</dbReference>
<dbReference type="RefSeq" id="WP_004189177.1">
    <property type="nucleotide sequence ID" value="NC_006348.1"/>
</dbReference>
<dbReference type="RefSeq" id="YP_101901.1">
    <property type="nucleotide sequence ID" value="NC_006348.1"/>
</dbReference>
<dbReference type="SMR" id="Q62N16"/>
<dbReference type="GeneID" id="92977834"/>
<dbReference type="KEGG" id="bma:BMA0052"/>
<dbReference type="PATRIC" id="fig|243160.12.peg.45"/>
<dbReference type="eggNOG" id="COG0320">
    <property type="taxonomic scope" value="Bacteria"/>
</dbReference>
<dbReference type="HOGENOM" id="CLU_033144_2_1_4"/>
<dbReference type="UniPathway" id="UPA00538">
    <property type="reaction ID" value="UER00593"/>
</dbReference>
<dbReference type="Proteomes" id="UP000006693">
    <property type="component" value="Chromosome 1"/>
</dbReference>
<dbReference type="GO" id="GO:0005737">
    <property type="term" value="C:cytoplasm"/>
    <property type="evidence" value="ECO:0007669"/>
    <property type="project" value="UniProtKB-SubCell"/>
</dbReference>
<dbReference type="GO" id="GO:0051539">
    <property type="term" value="F:4 iron, 4 sulfur cluster binding"/>
    <property type="evidence" value="ECO:0007669"/>
    <property type="project" value="UniProtKB-UniRule"/>
</dbReference>
<dbReference type="GO" id="GO:0016992">
    <property type="term" value="F:lipoate synthase activity"/>
    <property type="evidence" value="ECO:0007669"/>
    <property type="project" value="UniProtKB-UniRule"/>
</dbReference>
<dbReference type="GO" id="GO:0046872">
    <property type="term" value="F:metal ion binding"/>
    <property type="evidence" value="ECO:0007669"/>
    <property type="project" value="UniProtKB-KW"/>
</dbReference>
<dbReference type="CDD" id="cd01335">
    <property type="entry name" value="Radical_SAM"/>
    <property type="match status" value="1"/>
</dbReference>
<dbReference type="FunFam" id="3.20.20.70:FF:000040">
    <property type="entry name" value="Lipoyl synthase"/>
    <property type="match status" value="1"/>
</dbReference>
<dbReference type="Gene3D" id="3.20.20.70">
    <property type="entry name" value="Aldolase class I"/>
    <property type="match status" value="1"/>
</dbReference>
<dbReference type="HAMAP" id="MF_00206">
    <property type="entry name" value="Lipoyl_synth"/>
    <property type="match status" value="1"/>
</dbReference>
<dbReference type="InterPro" id="IPR013785">
    <property type="entry name" value="Aldolase_TIM"/>
</dbReference>
<dbReference type="InterPro" id="IPR006638">
    <property type="entry name" value="Elp3/MiaA/NifB-like_rSAM"/>
</dbReference>
<dbReference type="InterPro" id="IPR031691">
    <property type="entry name" value="LIAS_N"/>
</dbReference>
<dbReference type="InterPro" id="IPR003698">
    <property type="entry name" value="Lipoyl_synth"/>
</dbReference>
<dbReference type="InterPro" id="IPR007197">
    <property type="entry name" value="rSAM"/>
</dbReference>
<dbReference type="NCBIfam" id="TIGR00510">
    <property type="entry name" value="lipA"/>
    <property type="match status" value="1"/>
</dbReference>
<dbReference type="NCBIfam" id="NF004019">
    <property type="entry name" value="PRK05481.1"/>
    <property type="match status" value="1"/>
</dbReference>
<dbReference type="NCBIfam" id="NF009544">
    <property type="entry name" value="PRK12928.1"/>
    <property type="match status" value="1"/>
</dbReference>
<dbReference type="PANTHER" id="PTHR10949">
    <property type="entry name" value="LIPOYL SYNTHASE"/>
    <property type="match status" value="1"/>
</dbReference>
<dbReference type="PANTHER" id="PTHR10949:SF0">
    <property type="entry name" value="LIPOYL SYNTHASE, MITOCHONDRIAL"/>
    <property type="match status" value="1"/>
</dbReference>
<dbReference type="Pfam" id="PF16881">
    <property type="entry name" value="LIAS_N"/>
    <property type="match status" value="1"/>
</dbReference>
<dbReference type="Pfam" id="PF04055">
    <property type="entry name" value="Radical_SAM"/>
    <property type="match status" value="1"/>
</dbReference>
<dbReference type="PIRSF" id="PIRSF005963">
    <property type="entry name" value="Lipoyl_synth"/>
    <property type="match status" value="1"/>
</dbReference>
<dbReference type="SFLD" id="SFLDF00271">
    <property type="entry name" value="lipoyl_synthase"/>
    <property type="match status" value="1"/>
</dbReference>
<dbReference type="SFLD" id="SFLDG01058">
    <property type="entry name" value="lipoyl_synthase_like"/>
    <property type="match status" value="1"/>
</dbReference>
<dbReference type="SMART" id="SM00729">
    <property type="entry name" value="Elp3"/>
    <property type="match status" value="1"/>
</dbReference>
<dbReference type="SUPFAM" id="SSF102114">
    <property type="entry name" value="Radical SAM enzymes"/>
    <property type="match status" value="1"/>
</dbReference>
<dbReference type="PROSITE" id="PS51918">
    <property type="entry name" value="RADICAL_SAM"/>
    <property type="match status" value="1"/>
</dbReference>
<gene>
    <name evidence="1" type="primary">lipA</name>
    <name type="ordered locus">BMA0052</name>
</gene>
<comment type="function">
    <text evidence="1">Catalyzes the radical-mediated insertion of two sulfur atoms into the C-6 and C-8 positions of the octanoyl moiety bound to the lipoyl domains of lipoate-dependent enzymes, thereby converting the octanoylated domains into lipoylated derivatives.</text>
</comment>
<comment type="catalytic activity">
    <reaction evidence="1">
        <text>[[Fe-S] cluster scaffold protein carrying a second [4Fe-4S](2+) cluster] + N(6)-octanoyl-L-lysyl-[protein] + 2 oxidized [2Fe-2S]-[ferredoxin] + 2 S-adenosyl-L-methionine + 4 H(+) = [[Fe-S] cluster scaffold protein] + N(6)-[(R)-dihydrolipoyl]-L-lysyl-[protein] + 4 Fe(3+) + 2 hydrogen sulfide + 2 5'-deoxyadenosine + 2 L-methionine + 2 reduced [2Fe-2S]-[ferredoxin]</text>
        <dbReference type="Rhea" id="RHEA:16585"/>
        <dbReference type="Rhea" id="RHEA-COMP:9928"/>
        <dbReference type="Rhea" id="RHEA-COMP:10000"/>
        <dbReference type="Rhea" id="RHEA-COMP:10001"/>
        <dbReference type="Rhea" id="RHEA-COMP:10475"/>
        <dbReference type="Rhea" id="RHEA-COMP:14568"/>
        <dbReference type="Rhea" id="RHEA-COMP:14569"/>
        <dbReference type="ChEBI" id="CHEBI:15378"/>
        <dbReference type="ChEBI" id="CHEBI:17319"/>
        <dbReference type="ChEBI" id="CHEBI:29034"/>
        <dbReference type="ChEBI" id="CHEBI:29919"/>
        <dbReference type="ChEBI" id="CHEBI:33722"/>
        <dbReference type="ChEBI" id="CHEBI:33737"/>
        <dbReference type="ChEBI" id="CHEBI:33738"/>
        <dbReference type="ChEBI" id="CHEBI:57844"/>
        <dbReference type="ChEBI" id="CHEBI:59789"/>
        <dbReference type="ChEBI" id="CHEBI:78809"/>
        <dbReference type="ChEBI" id="CHEBI:83100"/>
        <dbReference type="EC" id="2.8.1.8"/>
    </reaction>
</comment>
<comment type="cofactor">
    <cofactor evidence="1">
        <name>[4Fe-4S] cluster</name>
        <dbReference type="ChEBI" id="CHEBI:49883"/>
    </cofactor>
    <text evidence="1">Binds 2 [4Fe-4S] clusters per subunit. One cluster is coordinated with 3 cysteines and an exchangeable S-adenosyl-L-methionine.</text>
</comment>
<comment type="pathway">
    <text evidence="1">Protein modification; protein lipoylation via endogenous pathway; protein N(6)-(lipoyl)lysine from octanoyl-[acyl-carrier-protein]: step 2/2.</text>
</comment>
<comment type="subcellular location">
    <subcellularLocation>
        <location evidence="1">Cytoplasm</location>
    </subcellularLocation>
</comment>
<comment type="similarity">
    <text evidence="1">Belongs to the radical SAM superfamily. Lipoyl synthase family.</text>
</comment>